<sequence>MREEPTAGTADATLNKLLQAADLSGYESDLRRKLKLRNAADLQYVEEVDLLSVGMSRPEQKRLRKEYTKMFPSGIFGKVKKAFKRAESLDRKTSNSVANQDDNDHHVIPIEKITLCKELGQGEFGSVWQAGWKNSAGSDVIQVAVKCVGSDKLLATSSSFLQEAAIMTRMRHEHVVRLYGVVLDTKKIMLVSELATCGSLLECLHKPALRDSFPVHVLCDYAEQIAMGMSYLELQRLIHRDLAARNVLVFSPKLVKISDFGLSRSLGIGEDYYRSEFTPNLKLPIAWCAPECINFLKFTSKSDVWAYGVTIWEMFSYGEMPWKGRSGAQILELVDRKKELLTRPKACPEDIYDMLKETWTHQVQDRPTFSDIVAKFPERRAQSVRAVVDCKDSAADHLHFKKDDLIVVISRSPAQYPDGYYWFGSLRNGKLGLFRPTDTVAHLGSEPPCSNGTIENGFSEKEKGGKKNKKAEKESERERKKLLISEPVGDVRHTCHVGIDGTAFGLLQLDKKAMCPTSSSPSTSRGSQASPAPSHTSSSTTSSVHLRETVARNGVPIKETMSLRDVGPLSRDALNLRDTVSPPVARAPSQPPSYSQPRPPPRSVSSVSSGNQHSVQVHDQFSSLDRSRGSLTPTAPPLTASAANSLKDPLTGISLSIPSNNLISYMDDQEDDHRWTRSPGAISQSTTLTALSSSRKDPIPAPRGPVAAVYARGKDIPTPASKSDIALCEKIEDLNRDLTNYSIGTICDYSEDRPLLDSMNRTISSSTTHQPPPQSSEARIRFMTEQEVRKINEKSAREHRKTEDLLREERQKEQKPGEIEEPQQPAESLYSTRTPQQEGWSSAAQEAYKLLVECGTNLKQASVSPPPMSPTSSRLSTLDRSSISPAPPRPVTPPLSVRNETISMRKSQQEEMEHVTVEENSPKRVHIIETKLIDGPARGMSPIQDRHIPAFTTPMSNGSFRKAPAPTPVSPAPAGSTDQKPPPCRPPKTRQFPLVIDERNLAYDNLNGFGAGARVAPPVPPKPKVRTIFSFADDQKKQKEVAN</sequence>
<feature type="chain" id="PRO_0000433876" description="Ack-related non-receptor tyrosine kinase" evidence="10">
    <location>
        <begin position="1"/>
        <end position="1043"/>
    </location>
</feature>
<feature type="domain" description="Protein kinase" evidence="4">
    <location>
        <begin position="113"/>
        <end position="379"/>
    </location>
</feature>
<feature type="domain" description="SH3" evidence="5">
    <location>
        <begin position="379"/>
        <end position="444"/>
    </location>
</feature>
<feature type="domain" description="CRIB" evidence="3">
    <location>
        <begin position="484"/>
        <end position="498"/>
    </location>
</feature>
<feature type="region of interest" description="Disordered" evidence="6">
    <location>
        <begin position="443"/>
        <end position="481"/>
    </location>
</feature>
<feature type="region of interest" description="Disordered" evidence="6">
    <location>
        <begin position="514"/>
        <end position="644"/>
    </location>
</feature>
<feature type="region of interest" description="Disordered" evidence="6">
    <location>
        <begin position="790"/>
        <end position="842"/>
    </location>
</feature>
<feature type="region of interest" description="Disordered" evidence="6">
    <location>
        <begin position="859"/>
        <end position="898"/>
    </location>
</feature>
<feature type="region of interest" description="Disordered" evidence="6">
    <location>
        <begin position="932"/>
        <end position="993"/>
    </location>
</feature>
<feature type="coiled-coil region" evidence="2">
    <location>
        <begin position="785"/>
        <end position="812"/>
    </location>
</feature>
<feature type="compositionally biased region" description="Basic and acidic residues" evidence="6">
    <location>
        <begin position="458"/>
        <end position="481"/>
    </location>
</feature>
<feature type="compositionally biased region" description="Low complexity" evidence="6">
    <location>
        <begin position="516"/>
        <end position="543"/>
    </location>
</feature>
<feature type="compositionally biased region" description="Polar residues" evidence="6">
    <location>
        <begin position="610"/>
        <end position="624"/>
    </location>
</feature>
<feature type="compositionally biased region" description="Low complexity" evidence="6">
    <location>
        <begin position="630"/>
        <end position="644"/>
    </location>
</feature>
<feature type="compositionally biased region" description="Basic and acidic residues" evidence="6">
    <location>
        <begin position="790"/>
        <end position="818"/>
    </location>
</feature>
<feature type="compositionally biased region" description="Polar residues" evidence="6">
    <location>
        <begin position="825"/>
        <end position="842"/>
    </location>
</feature>
<feature type="compositionally biased region" description="Low complexity" evidence="6">
    <location>
        <begin position="870"/>
        <end position="884"/>
    </location>
</feature>
<feature type="active site" description="Proton acceptor" evidence="4">
    <location>
        <position position="241"/>
    </location>
</feature>
<feature type="binding site" evidence="4">
    <location>
        <begin position="119"/>
        <end position="127"/>
    </location>
    <ligand>
        <name>ATP</name>
        <dbReference type="ChEBI" id="CHEBI:30616"/>
    </ligand>
</feature>
<feature type="binding site" evidence="4">
    <location>
        <position position="146"/>
    </location>
    <ligand>
        <name>ATP</name>
        <dbReference type="ChEBI" id="CHEBI:30616"/>
    </ligand>
</feature>
<feature type="splice variant" id="VSP_057849" description="In isoform b." evidence="10">
    <location>
        <begin position="1026"/>
        <end position="1029"/>
    </location>
</feature>
<name>ARK1_CAEEL</name>
<proteinExistence type="evidence at transcript level"/>
<accession>G5EBZ8</accession>
<accession>C6KRP0</accession>
<dbReference type="EC" id="2.7.10.2" evidence="1"/>
<dbReference type="EC" id="2.7.11.1" evidence="1"/>
<dbReference type="EMBL" id="AJ271057">
    <property type="protein sequence ID" value="CAB65957.1"/>
    <property type="molecule type" value="mRNA"/>
</dbReference>
<dbReference type="EMBL" id="BX284604">
    <property type="protein sequence ID" value="CAB05120.2"/>
    <property type="molecule type" value="Genomic_DNA"/>
</dbReference>
<dbReference type="EMBL" id="BX284604">
    <property type="protein sequence ID" value="CAZ39159.1"/>
    <property type="molecule type" value="Genomic_DNA"/>
</dbReference>
<dbReference type="PIR" id="T18802">
    <property type="entry name" value="T18802"/>
</dbReference>
<dbReference type="RefSeq" id="NP_001255653.1">
    <molecule id="G5EBZ8-2"/>
    <property type="nucleotide sequence ID" value="NM_001268724.2"/>
</dbReference>
<dbReference type="RefSeq" id="NP_001255654.1">
    <molecule id="G5EBZ8-1"/>
    <property type="nucleotide sequence ID" value="NM_001268725.4"/>
</dbReference>
<dbReference type="SMR" id="G5EBZ8"/>
<dbReference type="IntAct" id="G5EBZ8">
    <property type="interactions" value="4"/>
</dbReference>
<dbReference type="STRING" id="6239.C01C7.1a.1"/>
<dbReference type="PaxDb" id="6239-C01C7.1a"/>
<dbReference type="PeptideAtlas" id="G5EBZ8"/>
<dbReference type="EnsemblMetazoa" id="C01C7.1a.1">
    <molecule id="G5EBZ8-1"/>
    <property type="protein sequence ID" value="C01C7.1a.1"/>
    <property type="gene ID" value="WBGene00000186"/>
</dbReference>
<dbReference type="EnsemblMetazoa" id="C01C7.1b.1">
    <molecule id="G5EBZ8-2"/>
    <property type="protein sequence ID" value="C01C7.1b.1"/>
    <property type="gene ID" value="WBGene00000186"/>
</dbReference>
<dbReference type="GeneID" id="178218"/>
<dbReference type="KEGG" id="cel:CELE_C01C7.1"/>
<dbReference type="AGR" id="WB:WBGene00000186"/>
<dbReference type="CTD" id="178218"/>
<dbReference type="WormBase" id="C01C7.1a">
    <molecule id="G5EBZ8-1"/>
    <property type="protein sequence ID" value="CE26967"/>
    <property type="gene ID" value="WBGene00000186"/>
    <property type="gene designation" value="ark-1"/>
</dbReference>
<dbReference type="WormBase" id="C01C7.1b">
    <molecule id="G5EBZ8-2"/>
    <property type="protein sequence ID" value="CE43742"/>
    <property type="gene ID" value="WBGene00000186"/>
    <property type="gene designation" value="ark-1"/>
</dbReference>
<dbReference type="eggNOG" id="KOG0199">
    <property type="taxonomic scope" value="Eukaryota"/>
</dbReference>
<dbReference type="GeneTree" id="ENSGT00940000173732"/>
<dbReference type="HOGENOM" id="CLU_292269_0_0_1"/>
<dbReference type="InParanoid" id="G5EBZ8"/>
<dbReference type="OMA" id="YYRSEFT"/>
<dbReference type="OrthoDB" id="4062651at2759"/>
<dbReference type="SignaLink" id="G5EBZ8"/>
<dbReference type="PRO" id="PR:G5EBZ8"/>
<dbReference type="Proteomes" id="UP000001940">
    <property type="component" value="Chromosome IV"/>
</dbReference>
<dbReference type="Bgee" id="WBGene00000186">
    <property type="expression patterns" value="Expressed in pharyngeal muscle cell (C elegans) and 4 other cell types or tissues"/>
</dbReference>
<dbReference type="GO" id="GO:0005886">
    <property type="term" value="C:plasma membrane"/>
    <property type="evidence" value="ECO:0000318"/>
    <property type="project" value="GO_Central"/>
</dbReference>
<dbReference type="GO" id="GO:0005524">
    <property type="term" value="F:ATP binding"/>
    <property type="evidence" value="ECO:0007669"/>
    <property type="project" value="UniProtKB-KW"/>
</dbReference>
<dbReference type="GO" id="GO:0046872">
    <property type="term" value="F:metal ion binding"/>
    <property type="evidence" value="ECO:0007669"/>
    <property type="project" value="UniProtKB-KW"/>
</dbReference>
<dbReference type="GO" id="GO:0004715">
    <property type="term" value="F:non-membrane spanning protein tyrosine kinase activity"/>
    <property type="evidence" value="ECO:0007669"/>
    <property type="project" value="UniProtKB-EC"/>
</dbReference>
<dbReference type="GO" id="GO:0106310">
    <property type="term" value="F:protein serine kinase activity"/>
    <property type="evidence" value="ECO:0007669"/>
    <property type="project" value="RHEA"/>
</dbReference>
<dbReference type="GO" id="GO:0004674">
    <property type="term" value="F:protein serine/threonine kinase activity"/>
    <property type="evidence" value="ECO:0007669"/>
    <property type="project" value="UniProtKB-KW"/>
</dbReference>
<dbReference type="GO" id="GO:0004713">
    <property type="term" value="F:protein tyrosine kinase activity"/>
    <property type="evidence" value="ECO:0000318"/>
    <property type="project" value="GO_Central"/>
</dbReference>
<dbReference type="GO" id="GO:0009792">
    <property type="term" value="P:embryo development ending in birth or egg hatching"/>
    <property type="evidence" value="ECO:0000316"/>
    <property type="project" value="WormBase"/>
</dbReference>
<dbReference type="GO" id="GO:0042059">
    <property type="term" value="P:negative regulation of epidermal growth factor receptor signaling pathway"/>
    <property type="evidence" value="ECO:0000316"/>
    <property type="project" value="WormBase"/>
</dbReference>
<dbReference type="GO" id="GO:0040027">
    <property type="term" value="P:negative regulation of vulval development"/>
    <property type="evidence" value="ECO:0000315"/>
    <property type="project" value="WormBase"/>
</dbReference>
<dbReference type="CDD" id="cd05040">
    <property type="entry name" value="PTKc_Ack_like"/>
    <property type="match status" value="1"/>
</dbReference>
<dbReference type="CDD" id="cd00174">
    <property type="entry name" value="SH3"/>
    <property type="match status" value="1"/>
</dbReference>
<dbReference type="FunFam" id="2.30.30.40:FF:000249">
    <property type="entry name" value="Activated Cdc42 kinase-like"/>
    <property type="match status" value="1"/>
</dbReference>
<dbReference type="FunFam" id="1.10.510.10:FF:000521">
    <property type="entry name" value="Tyrosine-protein kinase pr2"/>
    <property type="match status" value="1"/>
</dbReference>
<dbReference type="Gene3D" id="2.30.30.40">
    <property type="entry name" value="SH3 Domains"/>
    <property type="match status" value="1"/>
</dbReference>
<dbReference type="Gene3D" id="1.10.510.10">
    <property type="entry name" value="Transferase(Phosphotransferase) domain 1"/>
    <property type="match status" value="1"/>
</dbReference>
<dbReference type="InterPro" id="IPR055175">
    <property type="entry name" value="ACK/TNK-like_SAM"/>
</dbReference>
<dbReference type="InterPro" id="IPR000095">
    <property type="entry name" value="CRIB_dom"/>
</dbReference>
<dbReference type="InterPro" id="IPR011009">
    <property type="entry name" value="Kinase-like_dom_sf"/>
</dbReference>
<dbReference type="InterPro" id="IPR050198">
    <property type="entry name" value="Non-receptor_tyrosine_kinases"/>
</dbReference>
<dbReference type="InterPro" id="IPR000719">
    <property type="entry name" value="Prot_kinase_dom"/>
</dbReference>
<dbReference type="InterPro" id="IPR017441">
    <property type="entry name" value="Protein_kinase_ATP_BS"/>
</dbReference>
<dbReference type="InterPro" id="IPR001245">
    <property type="entry name" value="Ser-Thr/Tyr_kinase_cat_dom"/>
</dbReference>
<dbReference type="InterPro" id="IPR036028">
    <property type="entry name" value="SH3-like_dom_sf"/>
</dbReference>
<dbReference type="InterPro" id="IPR001452">
    <property type="entry name" value="SH3_domain"/>
</dbReference>
<dbReference type="InterPro" id="IPR008266">
    <property type="entry name" value="Tyr_kinase_AS"/>
</dbReference>
<dbReference type="InterPro" id="IPR020635">
    <property type="entry name" value="Tyr_kinase_cat_dom"/>
</dbReference>
<dbReference type="PANTHER" id="PTHR24418">
    <property type="entry name" value="TYROSINE-PROTEIN KINASE"/>
    <property type="match status" value="1"/>
</dbReference>
<dbReference type="Pfam" id="PF07714">
    <property type="entry name" value="PK_Tyr_Ser-Thr"/>
    <property type="match status" value="1"/>
</dbReference>
<dbReference type="Pfam" id="PF22931">
    <property type="entry name" value="SAM_TNK"/>
    <property type="match status" value="1"/>
</dbReference>
<dbReference type="Pfam" id="PF07653">
    <property type="entry name" value="SH3_2"/>
    <property type="match status" value="1"/>
</dbReference>
<dbReference type="PRINTS" id="PR00109">
    <property type="entry name" value="TYRKINASE"/>
</dbReference>
<dbReference type="SMART" id="SM00285">
    <property type="entry name" value="PBD"/>
    <property type="match status" value="1"/>
</dbReference>
<dbReference type="SMART" id="SM00326">
    <property type="entry name" value="SH3"/>
    <property type="match status" value="1"/>
</dbReference>
<dbReference type="SMART" id="SM00219">
    <property type="entry name" value="TyrKc"/>
    <property type="match status" value="1"/>
</dbReference>
<dbReference type="SUPFAM" id="SSF56112">
    <property type="entry name" value="Protein kinase-like (PK-like)"/>
    <property type="match status" value="1"/>
</dbReference>
<dbReference type="SUPFAM" id="SSF50044">
    <property type="entry name" value="SH3-domain"/>
    <property type="match status" value="1"/>
</dbReference>
<dbReference type="PROSITE" id="PS50108">
    <property type="entry name" value="CRIB"/>
    <property type="match status" value="1"/>
</dbReference>
<dbReference type="PROSITE" id="PS00107">
    <property type="entry name" value="PROTEIN_KINASE_ATP"/>
    <property type="match status" value="1"/>
</dbReference>
<dbReference type="PROSITE" id="PS50011">
    <property type="entry name" value="PROTEIN_KINASE_DOM"/>
    <property type="match status" value="1"/>
</dbReference>
<dbReference type="PROSITE" id="PS00109">
    <property type="entry name" value="PROTEIN_KINASE_TYR"/>
    <property type="match status" value="1"/>
</dbReference>
<dbReference type="PROSITE" id="PS50002">
    <property type="entry name" value="SH3"/>
    <property type="match status" value="1"/>
</dbReference>
<reference evidence="11" key="1">
    <citation type="journal article" date="2000" name="Mol. Cell">
        <title>ARK-1 inhibits EGFR signaling in C. elegans.</title>
        <authorList>
            <person name="Hopper N.A."/>
            <person name="Lee J."/>
            <person name="Sternberg P.W."/>
        </authorList>
    </citation>
    <scope>NUCLEOTIDE SEQUENCE [MRNA] (ISOFORM A)</scope>
    <scope>FUNCTION</scope>
    <scope>DISRUPTION PHENOTYPE</scope>
    <source>
        <strain evidence="11">Bristol N2</strain>
    </source>
</reference>
<reference evidence="12" key="2">
    <citation type="journal article" date="1998" name="Science">
        <title>Genome sequence of the nematode C. elegans: a platform for investigating biology.</title>
        <authorList>
            <consortium name="The C. elegans sequencing consortium"/>
        </authorList>
    </citation>
    <scope>NUCLEOTIDE SEQUENCE [LARGE SCALE GENOMIC DNA]</scope>
    <source>
        <strain evidence="12">Bristol N2</strain>
    </source>
</reference>
<reference evidence="10" key="3">
    <citation type="journal article" date="2003" name="Science">
        <title>Redox regulation of germline and vulval development in Caenorhabditis elegans.</title>
        <authorList>
            <person name="Shibata Y."/>
            <person name="Branicky R."/>
            <person name="Landaverde I.O."/>
            <person name="Hekimi S."/>
        </authorList>
    </citation>
    <scope>FUNCTION</scope>
    <scope>DISRUPTION PHENOTYPE</scope>
</reference>
<gene>
    <name evidence="13" type="primary">ark-1</name>
    <name evidence="13" type="ORF">C01C7.1</name>
</gene>
<organism evidence="12">
    <name type="scientific">Caenorhabditis elegans</name>
    <dbReference type="NCBI Taxonomy" id="6239"/>
    <lineage>
        <taxon>Eukaryota</taxon>
        <taxon>Metazoa</taxon>
        <taxon>Ecdysozoa</taxon>
        <taxon>Nematoda</taxon>
        <taxon>Chromadorea</taxon>
        <taxon>Rhabditida</taxon>
        <taxon>Rhabditina</taxon>
        <taxon>Rhabditomorpha</taxon>
        <taxon>Rhabditoidea</taxon>
        <taxon>Rhabditidae</taxon>
        <taxon>Peloderinae</taxon>
        <taxon>Caenorhabditis</taxon>
    </lineage>
</organism>
<keyword id="KW-0025">Alternative splicing</keyword>
<keyword id="KW-0067">ATP-binding</keyword>
<keyword id="KW-0175">Coiled coil</keyword>
<keyword id="KW-0418">Kinase</keyword>
<keyword id="KW-0460">Magnesium</keyword>
<keyword id="KW-0479">Metal-binding</keyword>
<keyword id="KW-0547">Nucleotide-binding</keyword>
<keyword id="KW-1185">Reference proteome</keyword>
<keyword id="KW-0723">Serine/threonine-protein kinase</keyword>
<keyword id="KW-0728">SH3 domain</keyword>
<keyword id="KW-0808">Transferase</keyword>
<keyword id="KW-0829">Tyrosine-protein kinase</keyword>
<protein>
    <recommendedName>
        <fullName evidence="9">Ack-related non-receptor tyrosine kinase</fullName>
        <ecNumber evidence="1">2.7.10.2</ecNumber>
        <ecNumber evidence="1">2.7.11.1</ecNumber>
    </recommendedName>
    <alternativeName>
        <fullName evidence="13">Ras-regulating kinase ark-1</fullName>
    </alternativeName>
</protein>
<evidence type="ECO:0000250" key="1">
    <source>
        <dbReference type="UniProtKB" id="Q07912"/>
    </source>
</evidence>
<evidence type="ECO:0000255" key="2"/>
<evidence type="ECO:0000255" key="3">
    <source>
        <dbReference type="PROSITE-ProRule" id="PRU00057"/>
    </source>
</evidence>
<evidence type="ECO:0000255" key="4">
    <source>
        <dbReference type="PROSITE-ProRule" id="PRU00159"/>
    </source>
</evidence>
<evidence type="ECO:0000255" key="5">
    <source>
        <dbReference type="PROSITE-ProRule" id="PRU00192"/>
    </source>
</evidence>
<evidence type="ECO:0000256" key="6">
    <source>
        <dbReference type="SAM" id="MobiDB-lite"/>
    </source>
</evidence>
<evidence type="ECO:0000269" key="7">
    <source>
    </source>
</evidence>
<evidence type="ECO:0000269" key="8">
    <source>
    </source>
</evidence>
<evidence type="ECO:0000303" key="9">
    <source>
    </source>
</evidence>
<evidence type="ECO:0000305" key="10"/>
<evidence type="ECO:0000312" key="11">
    <source>
        <dbReference type="EMBL" id="CAB65957.1"/>
    </source>
</evidence>
<evidence type="ECO:0000312" key="12">
    <source>
        <dbReference type="Proteomes" id="UP000001940"/>
    </source>
</evidence>
<evidence type="ECO:0000312" key="13">
    <source>
        <dbReference type="WormBase" id="C01C7.1a"/>
    </source>
</evidence>
<evidence type="ECO:0000312" key="14">
    <source>
        <dbReference type="WormBase" id="C01C7.1b"/>
    </source>
</evidence>
<comment type="function">
    <text evidence="7 8">Probable tyrosine protein kinase which plays a role in vulva development, probably by acting as a negative regulator of the let-23/EGFR and let-60/ras pathway. Involved in the negative regulation of germline development (PubMed:14657502).</text>
</comment>
<comment type="catalytic activity">
    <reaction evidence="1">
        <text>L-tyrosyl-[protein] + ATP = O-phospho-L-tyrosyl-[protein] + ADP + H(+)</text>
        <dbReference type="Rhea" id="RHEA:10596"/>
        <dbReference type="Rhea" id="RHEA-COMP:10136"/>
        <dbReference type="Rhea" id="RHEA-COMP:20101"/>
        <dbReference type="ChEBI" id="CHEBI:15378"/>
        <dbReference type="ChEBI" id="CHEBI:30616"/>
        <dbReference type="ChEBI" id="CHEBI:46858"/>
        <dbReference type="ChEBI" id="CHEBI:61978"/>
        <dbReference type="ChEBI" id="CHEBI:456216"/>
        <dbReference type="EC" id="2.7.10.2"/>
    </reaction>
</comment>
<comment type="catalytic activity">
    <reaction evidence="1">
        <text>L-seryl-[protein] + ATP = O-phospho-L-seryl-[protein] + ADP + H(+)</text>
        <dbReference type="Rhea" id="RHEA:17989"/>
        <dbReference type="Rhea" id="RHEA-COMP:9863"/>
        <dbReference type="Rhea" id="RHEA-COMP:11604"/>
        <dbReference type="ChEBI" id="CHEBI:15378"/>
        <dbReference type="ChEBI" id="CHEBI:29999"/>
        <dbReference type="ChEBI" id="CHEBI:30616"/>
        <dbReference type="ChEBI" id="CHEBI:83421"/>
        <dbReference type="ChEBI" id="CHEBI:456216"/>
        <dbReference type="EC" id="2.7.11.1"/>
    </reaction>
</comment>
<comment type="catalytic activity">
    <reaction evidence="1">
        <text>L-threonyl-[protein] + ATP = O-phospho-L-threonyl-[protein] + ADP + H(+)</text>
        <dbReference type="Rhea" id="RHEA:46608"/>
        <dbReference type="Rhea" id="RHEA-COMP:11060"/>
        <dbReference type="Rhea" id="RHEA-COMP:11605"/>
        <dbReference type="ChEBI" id="CHEBI:15378"/>
        <dbReference type="ChEBI" id="CHEBI:30013"/>
        <dbReference type="ChEBI" id="CHEBI:30616"/>
        <dbReference type="ChEBI" id="CHEBI:61977"/>
        <dbReference type="ChEBI" id="CHEBI:456216"/>
        <dbReference type="EC" id="2.7.11.1"/>
    </reaction>
</comment>
<comment type="cofactor">
    <cofactor evidence="1">
        <name>Mg(2+)</name>
        <dbReference type="ChEBI" id="CHEBI:18420"/>
    </cofactor>
</comment>
<comment type="alternative products">
    <event type="alternative splicing"/>
    <isoform>
        <id>G5EBZ8-1</id>
        <name evidence="13">a</name>
        <sequence type="displayed"/>
    </isoform>
    <isoform>
        <id>G5EBZ8-2</id>
        <name evidence="14">b</name>
        <sequence type="described" ref="VSP_057849"/>
    </isoform>
</comment>
<comment type="disruption phenotype">
    <text evidence="7 8">RNAi-mediated knockdown in a gap-1 mutant background causes a hyperinduction of the vulva in 60 percent of animals (PubMed:10949028). In addition, suppresses the slow germline development of clk-1 mutants (PubMed:14657502).</text>
</comment>
<comment type="similarity">
    <text evidence="4">Belongs to the protein kinase superfamily. Tyr protein kinase family.</text>
</comment>